<proteinExistence type="inferred from homology"/>
<accession>Q9D7P0</accession>
<name>KRA33_MOUSE</name>
<sequence length="99" mass="10531">MACCVALCCSVPTGPATTICSSDKSCRCGVCLPSTCPHTIWQLEPTCCDNCPPPCHIPQPCVPTCFLLNSCHPTPDLLTVNLTTYVQPGCEEPCVPRCC</sequence>
<protein>
    <recommendedName>
        <fullName evidence="2">Keratin-associated protein 3-3</fullName>
    </recommendedName>
</protein>
<feature type="initiator methionine" description="Removed" evidence="1">
    <location>
        <position position="1"/>
    </location>
</feature>
<feature type="chain" id="PRO_0000358598" description="Keratin-associated protein 3-3">
    <location>
        <begin position="2"/>
        <end position="99"/>
    </location>
</feature>
<feature type="repeat" description="1" evidence="3">
    <location>
        <begin position="3"/>
        <end position="7"/>
    </location>
</feature>
<feature type="repeat" description="2" evidence="3">
    <location>
        <begin position="8"/>
        <end position="12"/>
    </location>
</feature>
<feature type="repeat" description="3" evidence="3">
    <location>
        <begin position="47"/>
        <end position="51"/>
    </location>
</feature>
<feature type="region of interest" description="3 X 5 AA repeats of C-C-X(3)" evidence="3">
    <location>
        <begin position="3"/>
        <end position="59"/>
    </location>
</feature>
<feature type="modified residue" description="N-acetylalanine" evidence="1">
    <location>
        <position position="2"/>
    </location>
</feature>
<gene>
    <name evidence="6" type="primary">Krtap3-3</name>
</gene>
<dbReference type="EMBL" id="AK009052">
    <property type="protein sequence ID" value="BAB26048.1"/>
    <property type="molecule type" value="mRNA"/>
</dbReference>
<dbReference type="FunCoup" id="Q9D7P0">
    <property type="interactions" value="72"/>
</dbReference>
<dbReference type="AGR" id="MGI:1913630"/>
<dbReference type="MGI" id="MGI:1913630">
    <property type="gene designation" value="Krtap3-3"/>
</dbReference>
<dbReference type="InParanoid" id="Q9D7P0"/>
<dbReference type="Reactome" id="R-MMU-6805567">
    <property type="pathway name" value="Keratinization"/>
</dbReference>
<dbReference type="PRO" id="PR:Q9D7P0"/>
<dbReference type="Proteomes" id="UP000000589">
    <property type="component" value="Unplaced"/>
</dbReference>
<dbReference type="RNAct" id="Q9D7P0">
    <property type="molecule type" value="protein"/>
</dbReference>
<dbReference type="GO" id="GO:0005829">
    <property type="term" value="C:cytosol"/>
    <property type="evidence" value="ECO:0007669"/>
    <property type="project" value="UniProtKB-ARBA"/>
</dbReference>
<dbReference type="GO" id="GO:0045095">
    <property type="term" value="C:keratin filament"/>
    <property type="evidence" value="ECO:0007669"/>
    <property type="project" value="InterPro"/>
</dbReference>
<dbReference type="GO" id="GO:0005198">
    <property type="term" value="F:structural molecule activity"/>
    <property type="evidence" value="ECO:0007669"/>
    <property type="project" value="InterPro"/>
</dbReference>
<dbReference type="InterPro" id="IPR007659">
    <property type="entry name" value="Keratin_matx"/>
</dbReference>
<dbReference type="PANTHER" id="PTHR23260">
    <property type="entry name" value="KERATIN ASSOCIATED PROTEIN 3-3-RELATED"/>
    <property type="match status" value="1"/>
</dbReference>
<dbReference type="PANTHER" id="PTHR23260:SF1">
    <property type="entry name" value="KERATIN-ASSOCIATED PROTEIN 3-3"/>
    <property type="match status" value="1"/>
</dbReference>
<dbReference type="Pfam" id="PF04579">
    <property type="entry name" value="Keratin_matx"/>
    <property type="match status" value="1"/>
</dbReference>
<keyword id="KW-0007">Acetylation</keyword>
<keyword id="KW-0416">Keratin</keyword>
<keyword id="KW-1185">Reference proteome</keyword>
<keyword id="KW-0677">Repeat</keyword>
<comment type="function">
    <text evidence="4">In the hair cortex, hair keratin intermediate filaments are embedded in an interfilamentous matrix, consisting of hair keratin-associated proteins (KRTAP), which are essential for the formation of a rigid and resistant hair shaft through their extensive disulfide bond cross-linking with abundant cysteine residues of hair keratins. The matrix proteins include the high-sulfur and high-glycine-tyrosine keratins.</text>
</comment>
<comment type="subunit">
    <text evidence="4">Interacts with hair keratins.</text>
</comment>
<comment type="similarity">
    <text evidence="2">Belongs to the KRTAP type 3 family.</text>
</comment>
<evidence type="ECO:0000250" key="1">
    <source>
        <dbReference type="UniProtKB" id="P02444"/>
    </source>
</evidence>
<evidence type="ECO:0000250" key="2">
    <source>
        <dbReference type="UniProtKB" id="Q9BYR6"/>
    </source>
</evidence>
<evidence type="ECO:0000255" key="3"/>
<evidence type="ECO:0000305" key="4"/>
<evidence type="ECO:0000312" key="5">
    <source>
        <dbReference type="EMBL" id="BAB26048.1"/>
    </source>
</evidence>
<evidence type="ECO:0000312" key="6">
    <source>
        <dbReference type="MGI" id="MGI:1913630"/>
    </source>
</evidence>
<organism>
    <name type="scientific">Mus musculus</name>
    <name type="common">Mouse</name>
    <dbReference type="NCBI Taxonomy" id="10090"/>
    <lineage>
        <taxon>Eukaryota</taxon>
        <taxon>Metazoa</taxon>
        <taxon>Chordata</taxon>
        <taxon>Craniata</taxon>
        <taxon>Vertebrata</taxon>
        <taxon>Euteleostomi</taxon>
        <taxon>Mammalia</taxon>
        <taxon>Eutheria</taxon>
        <taxon>Euarchontoglires</taxon>
        <taxon>Glires</taxon>
        <taxon>Rodentia</taxon>
        <taxon>Myomorpha</taxon>
        <taxon>Muroidea</taxon>
        <taxon>Muridae</taxon>
        <taxon>Murinae</taxon>
        <taxon>Mus</taxon>
        <taxon>Mus</taxon>
    </lineage>
</organism>
<reference evidence="5" key="1">
    <citation type="journal article" date="2005" name="Science">
        <title>The transcriptional landscape of the mammalian genome.</title>
        <authorList>
            <person name="Carninci P."/>
            <person name="Kasukawa T."/>
            <person name="Katayama S."/>
            <person name="Gough J."/>
            <person name="Frith M.C."/>
            <person name="Maeda N."/>
            <person name="Oyama R."/>
            <person name="Ravasi T."/>
            <person name="Lenhard B."/>
            <person name="Wells C."/>
            <person name="Kodzius R."/>
            <person name="Shimokawa K."/>
            <person name="Bajic V.B."/>
            <person name="Brenner S.E."/>
            <person name="Batalov S."/>
            <person name="Forrest A.R."/>
            <person name="Zavolan M."/>
            <person name="Davis M.J."/>
            <person name="Wilming L.G."/>
            <person name="Aidinis V."/>
            <person name="Allen J.E."/>
            <person name="Ambesi-Impiombato A."/>
            <person name="Apweiler R."/>
            <person name="Aturaliya R.N."/>
            <person name="Bailey T.L."/>
            <person name="Bansal M."/>
            <person name="Baxter L."/>
            <person name="Beisel K.W."/>
            <person name="Bersano T."/>
            <person name="Bono H."/>
            <person name="Chalk A.M."/>
            <person name="Chiu K.P."/>
            <person name="Choudhary V."/>
            <person name="Christoffels A."/>
            <person name="Clutterbuck D.R."/>
            <person name="Crowe M.L."/>
            <person name="Dalla E."/>
            <person name="Dalrymple B.P."/>
            <person name="de Bono B."/>
            <person name="Della Gatta G."/>
            <person name="di Bernardo D."/>
            <person name="Down T."/>
            <person name="Engstrom P."/>
            <person name="Fagiolini M."/>
            <person name="Faulkner G."/>
            <person name="Fletcher C.F."/>
            <person name="Fukushima T."/>
            <person name="Furuno M."/>
            <person name="Futaki S."/>
            <person name="Gariboldi M."/>
            <person name="Georgii-Hemming P."/>
            <person name="Gingeras T.R."/>
            <person name="Gojobori T."/>
            <person name="Green R.E."/>
            <person name="Gustincich S."/>
            <person name="Harbers M."/>
            <person name="Hayashi Y."/>
            <person name="Hensch T.K."/>
            <person name="Hirokawa N."/>
            <person name="Hill D."/>
            <person name="Huminiecki L."/>
            <person name="Iacono M."/>
            <person name="Ikeo K."/>
            <person name="Iwama A."/>
            <person name="Ishikawa T."/>
            <person name="Jakt M."/>
            <person name="Kanapin A."/>
            <person name="Katoh M."/>
            <person name="Kawasawa Y."/>
            <person name="Kelso J."/>
            <person name="Kitamura H."/>
            <person name="Kitano H."/>
            <person name="Kollias G."/>
            <person name="Krishnan S.P."/>
            <person name="Kruger A."/>
            <person name="Kummerfeld S.K."/>
            <person name="Kurochkin I.V."/>
            <person name="Lareau L.F."/>
            <person name="Lazarevic D."/>
            <person name="Lipovich L."/>
            <person name="Liu J."/>
            <person name="Liuni S."/>
            <person name="McWilliam S."/>
            <person name="Madan Babu M."/>
            <person name="Madera M."/>
            <person name="Marchionni L."/>
            <person name="Matsuda H."/>
            <person name="Matsuzawa S."/>
            <person name="Miki H."/>
            <person name="Mignone F."/>
            <person name="Miyake S."/>
            <person name="Morris K."/>
            <person name="Mottagui-Tabar S."/>
            <person name="Mulder N."/>
            <person name="Nakano N."/>
            <person name="Nakauchi H."/>
            <person name="Ng P."/>
            <person name="Nilsson R."/>
            <person name="Nishiguchi S."/>
            <person name="Nishikawa S."/>
            <person name="Nori F."/>
            <person name="Ohara O."/>
            <person name="Okazaki Y."/>
            <person name="Orlando V."/>
            <person name="Pang K.C."/>
            <person name="Pavan W.J."/>
            <person name="Pavesi G."/>
            <person name="Pesole G."/>
            <person name="Petrovsky N."/>
            <person name="Piazza S."/>
            <person name="Reed J."/>
            <person name="Reid J.F."/>
            <person name="Ring B.Z."/>
            <person name="Ringwald M."/>
            <person name="Rost B."/>
            <person name="Ruan Y."/>
            <person name="Salzberg S.L."/>
            <person name="Sandelin A."/>
            <person name="Schneider C."/>
            <person name="Schoenbach C."/>
            <person name="Sekiguchi K."/>
            <person name="Semple C.A."/>
            <person name="Seno S."/>
            <person name="Sessa L."/>
            <person name="Sheng Y."/>
            <person name="Shibata Y."/>
            <person name="Shimada H."/>
            <person name="Shimada K."/>
            <person name="Silva D."/>
            <person name="Sinclair B."/>
            <person name="Sperling S."/>
            <person name="Stupka E."/>
            <person name="Sugiura K."/>
            <person name="Sultana R."/>
            <person name="Takenaka Y."/>
            <person name="Taki K."/>
            <person name="Tammoja K."/>
            <person name="Tan S.L."/>
            <person name="Tang S."/>
            <person name="Taylor M.S."/>
            <person name="Tegner J."/>
            <person name="Teichmann S.A."/>
            <person name="Ueda H.R."/>
            <person name="van Nimwegen E."/>
            <person name="Verardo R."/>
            <person name="Wei C.L."/>
            <person name="Yagi K."/>
            <person name="Yamanishi H."/>
            <person name="Zabarovsky E."/>
            <person name="Zhu S."/>
            <person name="Zimmer A."/>
            <person name="Hide W."/>
            <person name="Bult C."/>
            <person name="Grimmond S.M."/>
            <person name="Teasdale R.D."/>
            <person name="Liu E.T."/>
            <person name="Brusic V."/>
            <person name="Quackenbush J."/>
            <person name="Wahlestedt C."/>
            <person name="Mattick J.S."/>
            <person name="Hume D.A."/>
            <person name="Kai C."/>
            <person name="Sasaki D."/>
            <person name="Tomaru Y."/>
            <person name="Fukuda S."/>
            <person name="Kanamori-Katayama M."/>
            <person name="Suzuki M."/>
            <person name="Aoki J."/>
            <person name="Arakawa T."/>
            <person name="Iida J."/>
            <person name="Imamura K."/>
            <person name="Itoh M."/>
            <person name="Kato T."/>
            <person name="Kawaji H."/>
            <person name="Kawagashira N."/>
            <person name="Kawashima T."/>
            <person name="Kojima M."/>
            <person name="Kondo S."/>
            <person name="Konno H."/>
            <person name="Nakano K."/>
            <person name="Ninomiya N."/>
            <person name="Nishio T."/>
            <person name="Okada M."/>
            <person name="Plessy C."/>
            <person name="Shibata K."/>
            <person name="Shiraki T."/>
            <person name="Suzuki S."/>
            <person name="Tagami M."/>
            <person name="Waki K."/>
            <person name="Watahiki A."/>
            <person name="Okamura-Oho Y."/>
            <person name="Suzuki H."/>
            <person name="Kawai J."/>
            <person name="Hayashizaki Y."/>
        </authorList>
    </citation>
    <scope>NUCLEOTIDE SEQUENCE [LARGE SCALE MRNA]</scope>
    <source>
        <strain evidence="5">C57BL/6J</strain>
        <tissue evidence="5">Tongue</tissue>
    </source>
</reference>